<gene>
    <name evidence="1" type="primary">dapB</name>
    <name type="ordered locus">PSHAa1227</name>
</gene>
<reference key="1">
    <citation type="journal article" date="2005" name="Genome Res.">
        <title>Coping with cold: the genome of the versatile marine Antarctica bacterium Pseudoalteromonas haloplanktis TAC125.</title>
        <authorList>
            <person name="Medigue C."/>
            <person name="Krin E."/>
            <person name="Pascal G."/>
            <person name="Barbe V."/>
            <person name="Bernsel A."/>
            <person name="Bertin P.N."/>
            <person name="Cheung F."/>
            <person name="Cruveiller S."/>
            <person name="D'Amico S."/>
            <person name="Duilio A."/>
            <person name="Fang G."/>
            <person name="Feller G."/>
            <person name="Ho C."/>
            <person name="Mangenot S."/>
            <person name="Marino G."/>
            <person name="Nilsson J."/>
            <person name="Parrilli E."/>
            <person name="Rocha E.P.C."/>
            <person name="Rouy Z."/>
            <person name="Sekowska A."/>
            <person name="Tutino M.L."/>
            <person name="Vallenet D."/>
            <person name="von Heijne G."/>
            <person name="Danchin A."/>
        </authorList>
    </citation>
    <scope>NUCLEOTIDE SEQUENCE [LARGE SCALE GENOMIC DNA]</scope>
    <source>
        <strain>TAC 125</strain>
    </source>
</reference>
<feature type="chain" id="PRO_0000228373" description="4-hydroxy-tetrahydrodipicolinate reductase">
    <location>
        <begin position="1"/>
        <end position="267"/>
    </location>
</feature>
<feature type="active site" description="Proton donor/acceptor" evidence="1">
    <location>
        <position position="155"/>
    </location>
</feature>
<feature type="active site" description="Proton donor" evidence="1">
    <location>
        <position position="159"/>
    </location>
</feature>
<feature type="binding site" evidence="1">
    <location>
        <begin position="10"/>
        <end position="15"/>
    </location>
    <ligand>
        <name>NAD(+)</name>
        <dbReference type="ChEBI" id="CHEBI:57540"/>
    </ligand>
</feature>
<feature type="binding site" evidence="1">
    <location>
        <position position="37"/>
    </location>
    <ligand>
        <name>NADP(+)</name>
        <dbReference type="ChEBI" id="CHEBI:58349"/>
    </ligand>
</feature>
<feature type="binding site" evidence="1">
    <location>
        <begin position="98"/>
        <end position="100"/>
    </location>
    <ligand>
        <name>NAD(+)</name>
        <dbReference type="ChEBI" id="CHEBI:57540"/>
    </ligand>
</feature>
<feature type="binding site" evidence="1">
    <location>
        <begin position="122"/>
        <end position="125"/>
    </location>
    <ligand>
        <name>NAD(+)</name>
        <dbReference type="ChEBI" id="CHEBI:57540"/>
    </ligand>
</feature>
<feature type="binding site" evidence="1">
    <location>
        <position position="156"/>
    </location>
    <ligand>
        <name>(S)-2,3,4,5-tetrahydrodipicolinate</name>
        <dbReference type="ChEBI" id="CHEBI:16845"/>
    </ligand>
</feature>
<feature type="binding site" evidence="1">
    <location>
        <begin position="165"/>
        <end position="166"/>
    </location>
    <ligand>
        <name>(S)-2,3,4,5-tetrahydrodipicolinate</name>
        <dbReference type="ChEBI" id="CHEBI:16845"/>
    </ligand>
</feature>
<name>DAPB_PSET1</name>
<dbReference type="EC" id="1.17.1.8" evidence="1"/>
<dbReference type="EMBL" id="CR954246">
    <property type="protein sequence ID" value="CAI86302.1"/>
    <property type="molecule type" value="Genomic_DNA"/>
</dbReference>
<dbReference type="SMR" id="Q3IKQ7"/>
<dbReference type="STRING" id="326442.PSHAa1227"/>
<dbReference type="KEGG" id="pha:PSHAa1227"/>
<dbReference type="PATRIC" id="fig|326442.8.peg.1181"/>
<dbReference type="eggNOG" id="COG0289">
    <property type="taxonomic scope" value="Bacteria"/>
</dbReference>
<dbReference type="HOGENOM" id="CLU_047479_2_1_6"/>
<dbReference type="BioCyc" id="PHAL326442:PSHA_RS06055-MONOMER"/>
<dbReference type="UniPathway" id="UPA00034">
    <property type="reaction ID" value="UER00018"/>
</dbReference>
<dbReference type="Proteomes" id="UP000006843">
    <property type="component" value="Chromosome I"/>
</dbReference>
<dbReference type="GO" id="GO:0005829">
    <property type="term" value="C:cytosol"/>
    <property type="evidence" value="ECO:0007669"/>
    <property type="project" value="TreeGrafter"/>
</dbReference>
<dbReference type="GO" id="GO:0008839">
    <property type="term" value="F:4-hydroxy-tetrahydrodipicolinate reductase"/>
    <property type="evidence" value="ECO:0007669"/>
    <property type="project" value="UniProtKB-EC"/>
</dbReference>
<dbReference type="GO" id="GO:0051287">
    <property type="term" value="F:NAD binding"/>
    <property type="evidence" value="ECO:0007669"/>
    <property type="project" value="UniProtKB-UniRule"/>
</dbReference>
<dbReference type="GO" id="GO:0050661">
    <property type="term" value="F:NADP binding"/>
    <property type="evidence" value="ECO:0007669"/>
    <property type="project" value="UniProtKB-UniRule"/>
</dbReference>
<dbReference type="GO" id="GO:0016726">
    <property type="term" value="F:oxidoreductase activity, acting on CH or CH2 groups, NAD or NADP as acceptor"/>
    <property type="evidence" value="ECO:0007669"/>
    <property type="project" value="UniProtKB-UniRule"/>
</dbReference>
<dbReference type="GO" id="GO:0019877">
    <property type="term" value="P:diaminopimelate biosynthetic process"/>
    <property type="evidence" value="ECO:0007669"/>
    <property type="project" value="UniProtKB-UniRule"/>
</dbReference>
<dbReference type="GO" id="GO:0009089">
    <property type="term" value="P:lysine biosynthetic process via diaminopimelate"/>
    <property type="evidence" value="ECO:0007669"/>
    <property type="project" value="UniProtKB-UniRule"/>
</dbReference>
<dbReference type="CDD" id="cd02274">
    <property type="entry name" value="DHDPR_N"/>
    <property type="match status" value="1"/>
</dbReference>
<dbReference type="FunFam" id="3.30.360.10:FF:000004">
    <property type="entry name" value="4-hydroxy-tetrahydrodipicolinate reductase"/>
    <property type="match status" value="1"/>
</dbReference>
<dbReference type="Gene3D" id="3.30.360.10">
    <property type="entry name" value="Dihydrodipicolinate Reductase, domain 2"/>
    <property type="match status" value="1"/>
</dbReference>
<dbReference type="Gene3D" id="3.40.50.720">
    <property type="entry name" value="NAD(P)-binding Rossmann-like Domain"/>
    <property type="match status" value="1"/>
</dbReference>
<dbReference type="HAMAP" id="MF_00102">
    <property type="entry name" value="DapB"/>
    <property type="match status" value="1"/>
</dbReference>
<dbReference type="InterPro" id="IPR022663">
    <property type="entry name" value="DapB_C"/>
</dbReference>
<dbReference type="InterPro" id="IPR000846">
    <property type="entry name" value="DapB_N"/>
</dbReference>
<dbReference type="InterPro" id="IPR022664">
    <property type="entry name" value="DapB_N_CS"/>
</dbReference>
<dbReference type="InterPro" id="IPR023940">
    <property type="entry name" value="DHDPR_bac"/>
</dbReference>
<dbReference type="InterPro" id="IPR036291">
    <property type="entry name" value="NAD(P)-bd_dom_sf"/>
</dbReference>
<dbReference type="NCBIfam" id="TIGR00036">
    <property type="entry name" value="dapB"/>
    <property type="match status" value="1"/>
</dbReference>
<dbReference type="PANTHER" id="PTHR20836:SF0">
    <property type="entry name" value="4-HYDROXY-TETRAHYDRODIPICOLINATE REDUCTASE 1, CHLOROPLASTIC-RELATED"/>
    <property type="match status" value="1"/>
</dbReference>
<dbReference type="PANTHER" id="PTHR20836">
    <property type="entry name" value="DIHYDRODIPICOLINATE REDUCTASE"/>
    <property type="match status" value="1"/>
</dbReference>
<dbReference type="Pfam" id="PF05173">
    <property type="entry name" value="DapB_C"/>
    <property type="match status" value="1"/>
</dbReference>
<dbReference type="Pfam" id="PF01113">
    <property type="entry name" value="DapB_N"/>
    <property type="match status" value="1"/>
</dbReference>
<dbReference type="PIRSF" id="PIRSF000161">
    <property type="entry name" value="DHPR"/>
    <property type="match status" value="1"/>
</dbReference>
<dbReference type="SUPFAM" id="SSF55347">
    <property type="entry name" value="Glyceraldehyde-3-phosphate dehydrogenase-like, C-terminal domain"/>
    <property type="match status" value="1"/>
</dbReference>
<dbReference type="SUPFAM" id="SSF51735">
    <property type="entry name" value="NAD(P)-binding Rossmann-fold domains"/>
    <property type="match status" value="1"/>
</dbReference>
<dbReference type="PROSITE" id="PS01298">
    <property type="entry name" value="DAPB"/>
    <property type="match status" value="1"/>
</dbReference>
<comment type="function">
    <text evidence="1">Catalyzes the conversion of 4-hydroxy-tetrahydrodipicolinate (HTPA) to tetrahydrodipicolinate.</text>
</comment>
<comment type="catalytic activity">
    <reaction evidence="1">
        <text>(S)-2,3,4,5-tetrahydrodipicolinate + NAD(+) + H2O = (2S,4S)-4-hydroxy-2,3,4,5-tetrahydrodipicolinate + NADH + H(+)</text>
        <dbReference type="Rhea" id="RHEA:35323"/>
        <dbReference type="ChEBI" id="CHEBI:15377"/>
        <dbReference type="ChEBI" id="CHEBI:15378"/>
        <dbReference type="ChEBI" id="CHEBI:16845"/>
        <dbReference type="ChEBI" id="CHEBI:57540"/>
        <dbReference type="ChEBI" id="CHEBI:57945"/>
        <dbReference type="ChEBI" id="CHEBI:67139"/>
        <dbReference type="EC" id="1.17.1.8"/>
    </reaction>
</comment>
<comment type="catalytic activity">
    <reaction evidence="1">
        <text>(S)-2,3,4,5-tetrahydrodipicolinate + NADP(+) + H2O = (2S,4S)-4-hydroxy-2,3,4,5-tetrahydrodipicolinate + NADPH + H(+)</text>
        <dbReference type="Rhea" id="RHEA:35331"/>
        <dbReference type="ChEBI" id="CHEBI:15377"/>
        <dbReference type="ChEBI" id="CHEBI:15378"/>
        <dbReference type="ChEBI" id="CHEBI:16845"/>
        <dbReference type="ChEBI" id="CHEBI:57783"/>
        <dbReference type="ChEBI" id="CHEBI:58349"/>
        <dbReference type="ChEBI" id="CHEBI:67139"/>
        <dbReference type="EC" id="1.17.1.8"/>
    </reaction>
</comment>
<comment type="pathway">
    <text evidence="1">Amino-acid biosynthesis; L-lysine biosynthesis via DAP pathway; (S)-tetrahydrodipicolinate from L-aspartate: step 4/4.</text>
</comment>
<comment type="subcellular location">
    <subcellularLocation>
        <location evidence="1">Cytoplasm</location>
    </subcellularLocation>
</comment>
<comment type="similarity">
    <text evidence="1">Belongs to the DapB family.</text>
</comment>
<comment type="caution">
    <text evidence="2">Was originally thought to be a dihydrodipicolinate reductase (DHDPR), catalyzing the conversion of dihydrodipicolinate to tetrahydrodipicolinate. However, it was shown in E.coli that the substrate of the enzymatic reaction is not dihydrodipicolinate (DHDP) but in fact (2S,4S)-4-hydroxy-2,3,4,5-tetrahydrodipicolinic acid (HTPA), the product released by the DapA-catalyzed reaction.</text>
</comment>
<keyword id="KW-0028">Amino-acid biosynthesis</keyword>
<keyword id="KW-0963">Cytoplasm</keyword>
<keyword id="KW-0220">Diaminopimelate biosynthesis</keyword>
<keyword id="KW-0457">Lysine biosynthesis</keyword>
<keyword id="KW-0520">NAD</keyword>
<keyword id="KW-0521">NADP</keyword>
<keyword id="KW-0560">Oxidoreductase</keyword>
<keyword id="KW-1185">Reference proteome</keyword>
<organism>
    <name type="scientific">Pseudoalteromonas translucida (strain TAC 125)</name>
    <dbReference type="NCBI Taxonomy" id="326442"/>
    <lineage>
        <taxon>Bacteria</taxon>
        <taxon>Pseudomonadati</taxon>
        <taxon>Pseudomonadota</taxon>
        <taxon>Gammaproteobacteria</taxon>
        <taxon>Alteromonadales</taxon>
        <taxon>Pseudoalteromonadaceae</taxon>
        <taxon>Pseudoalteromonas</taxon>
    </lineage>
</organism>
<evidence type="ECO:0000255" key="1">
    <source>
        <dbReference type="HAMAP-Rule" id="MF_00102"/>
    </source>
</evidence>
<evidence type="ECO:0000305" key="2"/>
<accession>Q3IKQ7</accession>
<proteinExistence type="inferred from homology"/>
<protein>
    <recommendedName>
        <fullName evidence="1">4-hydroxy-tetrahydrodipicolinate reductase</fullName>
        <shortName evidence="1">HTPA reductase</shortName>
        <ecNumber evidence="1">1.17.1.8</ecNumber>
    </recommendedName>
</protein>
<sequence length="267" mass="28675">MTKNKIGVFGANGRMGSALLEAASTKEHSELAAAYVRSSSPLLGINVNQLNSAADKTVTFSDEANITNVDVLIDFTLPAGMRTHLQTAVKQGVPMVIGTTGLNEADMTLLHEAANHIPIVFARNYSVGVNVLLNLVQTAATKFGDDMDIEIFEAHHRHKIDAPSGTALAIGEAIADAKGWDHDKVAVYDRSKVEQAKSQNEIGYSVLRGGDIVGEHTAYFATMGERLELTHKASSRMTFALGAIRAAGWLINKPAGLYDMQDVLDLK</sequence>